<reference key="1">
    <citation type="submission" date="2007-11" db="EMBL/GenBank/DDBJ databases">
        <authorList>
            <consortium name="The Salmonella enterica serovar Arizonae Genome Sequencing Project"/>
            <person name="McClelland M."/>
            <person name="Sanderson E.K."/>
            <person name="Porwollik S."/>
            <person name="Spieth J."/>
            <person name="Clifton W.S."/>
            <person name="Fulton R."/>
            <person name="Chunyan W."/>
            <person name="Wollam A."/>
            <person name="Shah N."/>
            <person name="Pepin K."/>
            <person name="Bhonagiri V."/>
            <person name="Nash W."/>
            <person name="Johnson M."/>
            <person name="Thiruvilangam P."/>
            <person name="Wilson R."/>
        </authorList>
    </citation>
    <scope>NUCLEOTIDE SEQUENCE [LARGE SCALE GENOMIC DNA]</scope>
    <source>
        <strain>ATCC BAA-731 / CDC346-86 / RSK2980</strain>
    </source>
</reference>
<organism>
    <name type="scientific">Salmonella arizonae (strain ATCC BAA-731 / CDC346-86 / RSK2980)</name>
    <dbReference type="NCBI Taxonomy" id="41514"/>
    <lineage>
        <taxon>Bacteria</taxon>
        <taxon>Pseudomonadati</taxon>
        <taxon>Pseudomonadota</taxon>
        <taxon>Gammaproteobacteria</taxon>
        <taxon>Enterobacterales</taxon>
        <taxon>Enterobacteriaceae</taxon>
        <taxon>Salmonella</taxon>
    </lineage>
</organism>
<proteinExistence type="inferred from homology"/>
<dbReference type="EC" id="4.6.1.17" evidence="1"/>
<dbReference type="EMBL" id="CP000880">
    <property type="protein sequence ID" value="ABX21998.1"/>
    <property type="molecule type" value="Genomic_DNA"/>
</dbReference>
<dbReference type="SMR" id="A9MIU5"/>
<dbReference type="STRING" id="41514.SARI_02121"/>
<dbReference type="KEGG" id="ses:SARI_02121"/>
<dbReference type="HOGENOM" id="CLU_074693_1_1_6"/>
<dbReference type="UniPathway" id="UPA00344"/>
<dbReference type="Proteomes" id="UP000002084">
    <property type="component" value="Chromosome"/>
</dbReference>
<dbReference type="GO" id="GO:0061799">
    <property type="term" value="F:cyclic pyranopterin monophosphate synthase activity"/>
    <property type="evidence" value="ECO:0007669"/>
    <property type="project" value="UniProtKB-UniRule"/>
</dbReference>
<dbReference type="GO" id="GO:0006777">
    <property type="term" value="P:Mo-molybdopterin cofactor biosynthetic process"/>
    <property type="evidence" value="ECO:0007669"/>
    <property type="project" value="UniProtKB-UniRule"/>
</dbReference>
<dbReference type="CDD" id="cd01420">
    <property type="entry name" value="MoaC_PE"/>
    <property type="match status" value="1"/>
</dbReference>
<dbReference type="FunFam" id="3.30.70.640:FF:000001">
    <property type="entry name" value="Cyclic pyranopterin monophosphate synthase"/>
    <property type="match status" value="1"/>
</dbReference>
<dbReference type="Gene3D" id="3.30.70.640">
    <property type="entry name" value="Molybdopterin cofactor biosynthesis C (MoaC) domain"/>
    <property type="match status" value="1"/>
</dbReference>
<dbReference type="HAMAP" id="MF_01224_B">
    <property type="entry name" value="MoaC_B"/>
    <property type="match status" value="1"/>
</dbReference>
<dbReference type="InterPro" id="IPR023045">
    <property type="entry name" value="MoaC"/>
</dbReference>
<dbReference type="InterPro" id="IPR047594">
    <property type="entry name" value="MoaC_bact/euk"/>
</dbReference>
<dbReference type="InterPro" id="IPR036522">
    <property type="entry name" value="MoaC_sf"/>
</dbReference>
<dbReference type="InterPro" id="IPR050105">
    <property type="entry name" value="MoCo_biosynth_MoaA/MoaC"/>
</dbReference>
<dbReference type="InterPro" id="IPR002820">
    <property type="entry name" value="Mopterin_CF_biosynth-C_dom"/>
</dbReference>
<dbReference type="NCBIfam" id="TIGR00581">
    <property type="entry name" value="moaC"/>
    <property type="match status" value="1"/>
</dbReference>
<dbReference type="NCBIfam" id="NF006870">
    <property type="entry name" value="PRK09364.1"/>
    <property type="match status" value="1"/>
</dbReference>
<dbReference type="PANTHER" id="PTHR22960">
    <property type="entry name" value="MOLYBDOPTERIN COFACTOR SYNTHESIS PROTEIN A"/>
    <property type="match status" value="1"/>
</dbReference>
<dbReference type="Pfam" id="PF01967">
    <property type="entry name" value="MoaC"/>
    <property type="match status" value="1"/>
</dbReference>
<dbReference type="SUPFAM" id="SSF55040">
    <property type="entry name" value="Molybdenum cofactor biosynthesis protein C, MoaC"/>
    <property type="match status" value="1"/>
</dbReference>
<sequence length="161" mass="17430">MSQLTHINAAGEAHMVDVSAKAETVREARAEAFVTMHSETLAMIIDGKHHKGDVFATARIAGIQAAKRTWELIPLCHPLLLSKVEVQLQAESEHNRVRIESLCRLTGKTGVEMEALTAASVAALTIYDMCKAVQKDMVIGPVRLLAKSGGNSGDFKVDTHD</sequence>
<evidence type="ECO:0000255" key="1">
    <source>
        <dbReference type="HAMAP-Rule" id="MF_01224"/>
    </source>
</evidence>
<comment type="function">
    <text evidence="1">Catalyzes the conversion of (8S)-3',8-cyclo-7,8-dihydroguanosine 5'-triphosphate to cyclic pyranopterin monophosphate (cPMP).</text>
</comment>
<comment type="catalytic activity">
    <reaction evidence="1">
        <text>(8S)-3',8-cyclo-7,8-dihydroguanosine 5'-triphosphate = cyclic pyranopterin phosphate + diphosphate</text>
        <dbReference type="Rhea" id="RHEA:49580"/>
        <dbReference type="ChEBI" id="CHEBI:33019"/>
        <dbReference type="ChEBI" id="CHEBI:59648"/>
        <dbReference type="ChEBI" id="CHEBI:131766"/>
        <dbReference type="EC" id="4.6.1.17"/>
    </reaction>
</comment>
<comment type="pathway">
    <text evidence="1">Cofactor biosynthesis; molybdopterin biosynthesis.</text>
</comment>
<comment type="subunit">
    <text evidence="1">Homohexamer; trimer of dimers.</text>
</comment>
<comment type="similarity">
    <text evidence="1">Belongs to the MoaC family.</text>
</comment>
<accession>A9MIU5</accession>
<feature type="chain" id="PRO_1000085683" description="Cyclic pyranopterin monophosphate synthase">
    <location>
        <begin position="1"/>
        <end position="161"/>
    </location>
</feature>
<feature type="active site" evidence="1">
    <location>
        <position position="128"/>
    </location>
</feature>
<feature type="binding site" evidence="1">
    <location>
        <begin position="75"/>
        <end position="77"/>
    </location>
    <ligand>
        <name>substrate</name>
    </ligand>
</feature>
<feature type="binding site" evidence="1">
    <location>
        <begin position="113"/>
        <end position="114"/>
    </location>
    <ligand>
        <name>substrate</name>
    </ligand>
</feature>
<gene>
    <name evidence="1" type="primary">moaC</name>
    <name type="ordered locus">SARI_02121</name>
</gene>
<protein>
    <recommendedName>
        <fullName evidence="1">Cyclic pyranopterin monophosphate synthase</fullName>
        <ecNumber evidence="1">4.6.1.17</ecNumber>
    </recommendedName>
    <alternativeName>
        <fullName evidence="1">Molybdenum cofactor biosynthesis protein C</fullName>
    </alternativeName>
</protein>
<keyword id="KW-0456">Lyase</keyword>
<keyword id="KW-0501">Molybdenum cofactor biosynthesis</keyword>
<keyword id="KW-1185">Reference proteome</keyword>
<name>MOAC_SALAR</name>